<keyword id="KW-0249">Electron transport</keyword>
<keyword id="KW-0472">Membrane</keyword>
<keyword id="KW-0602">Photosynthesis</keyword>
<keyword id="KW-1185">Reference proteome</keyword>
<keyword id="KW-0793">Thylakoid</keyword>
<keyword id="KW-0812">Transmembrane</keyword>
<keyword id="KW-1133">Transmembrane helix</keyword>
<keyword id="KW-0813">Transport</keyword>
<reference key="1">
    <citation type="journal article" date="2008" name="Proc. Natl. Acad. Sci. U.S.A.">
        <title>Niche adaptation and genome expansion in the chlorophyll d-producing cyanobacterium Acaryochloris marina.</title>
        <authorList>
            <person name="Swingley W.D."/>
            <person name="Chen M."/>
            <person name="Cheung P.C."/>
            <person name="Conrad A.L."/>
            <person name="Dejesa L.C."/>
            <person name="Hao J."/>
            <person name="Honchak B.M."/>
            <person name="Karbach L.E."/>
            <person name="Kurdoglu A."/>
            <person name="Lahiri S."/>
            <person name="Mastrian S.D."/>
            <person name="Miyashita H."/>
            <person name="Page L."/>
            <person name="Ramakrishna P."/>
            <person name="Satoh S."/>
            <person name="Sattley W.M."/>
            <person name="Shimada Y."/>
            <person name="Taylor H.L."/>
            <person name="Tomo T."/>
            <person name="Tsuchiya T."/>
            <person name="Wang Z.T."/>
            <person name="Raymond J."/>
            <person name="Mimuro M."/>
            <person name="Blankenship R.E."/>
            <person name="Touchman J.W."/>
        </authorList>
    </citation>
    <scope>NUCLEOTIDE SEQUENCE [LARGE SCALE GENOMIC DNA]</scope>
    <source>
        <strain>MBIC 11017</strain>
    </source>
</reference>
<feature type="chain" id="PRO_1000143200" description="Cytochrome b6-f complex subunit 4">
    <location>
        <begin position="1"/>
        <end position="161"/>
    </location>
</feature>
<feature type="transmembrane region" description="Helical" evidence="1">
    <location>
        <begin position="37"/>
        <end position="57"/>
    </location>
</feature>
<feature type="transmembrane region" description="Helical" evidence="1">
    <location>
        <begin position="96"/>
        <end position="116"/>
    </location>
</feature>
<feature type="transmembrane region" description="Helical" evidence="1">
    <location>
        <begin position="132"/>
        <end position="152"/>
    </location>
</feature>
<comment type="function">
    <text evidence="1">Component of the cytochrome b6-f complex, which mediates electron transfer between photosystem II (PSII) and photosystem I (PSI), cyclic electron flow around PSI, and state transitions.</text>
</comment>
<comment type="subunit">
    <text evidence="1">The 4 large subunits of the cytochrome b6-f complex are cytochrome b6, subunit IV (17 kDa polypeptide, PetD), cytochrome f and the Rieske protein, while the 4 small subunits are PetG, PetL, PetM and PetN. The complex functions as a dimer.</text>
</comment>
<comment type="subcellular location">
    <subcellularLocation>
        <location evidence="1">Cellular thylakoid membrane</location>
        <topology evidence="1">Multi-pass membrane protein</topology>
    </subcellularLocation>
</comment>
<comment type="similarity">
    <text evidence="1">Belongs to the cytochrome b family. PetD subfamily.</text>
</comment>
<organism>
    <name type="scientific">Acaryochloris marina (strain MBIC 11017)</name>
    <dbReference type="NCBI Taxonomy" id="329726"/>
    <lineage>
        <taxon>Bacteria</taxon>
        <taxon>Bacillati</taxon>
        <taxon>Cyanobacteriota</taxon>
        <taxon>Cyanophyceae</taxon>
        <taxon>Acaryochloridales</taxon>
        <taxon>Acaryochloridaceae</taxon>
        <taxon>Acaryochloris</taxon>
    </lineage>
</organism>
<accession>B0C0E7</accession>
<proteinExistence type="inferred from homology"/>
<evidence type="ECO:0000255" key="1">
    <source>
        <dbReference type="HAMAP-Rule" id="MF_01344"/>
    </source>
</evidence>
<gene>
    <name evidence="1" type="primary">petD</name>
    <name type="ordered locus">AM1_4665</name>
</gene>
<dbReference type="EMBL" id="CP000828">
    <property type="protein sequence ID" value="ABW29639.1"/>
    <property type="molecule type" value="Genomic_DNA"/>
</dbReference>
<dbReference type="RefSeq" id="WP_012164940.1">
    <property type="nucleotide sequence ID" value="NC_009925.1"/>
</dbReference>
<dbReference type="SMR" id="B0C0E7"/>
<dbReference type="STRING" id="329726.AM1_4665"/>
<dbReference type="KEGG" id="amr:AM1_4665"/>
<dbReference type="eggNOG" id="COG1290">
    <property type="taxonomic scope" value="Bacteria"/>
</dbReference>
<dbReference type="HOGENOM" id="CLU_112652_0_0_3"/>
<dbReference type="OrthoDB" id="529454at2"/>
<dbReference type="Proteomes" id="UP000000268">
    <property type="component" value="Chromosome"/>
</dbReference>
<dbReference type="GO" id="GO:0031676">
    <property type="term" value="C:plasma membrane-derived thylakoid membrane"/>
    <property type="evidence" value="ECO:0007669"/>
    <property type="project" value="UniProtKB-SubCell"/>
</dbReference>
<dbReference type="GO" id="GO:0045158">
    <property type="term" value="F:electron transporter, transferring electrons within cytochrome b6/f complex of photosystem II activity"/>
    <property type="evidence" value="ECO:0007669"/>
    <property type="project" value="UniProtKB-UniRule"/>
</dbReference>
<dbReference type="GO" id="GO:0045156">
    <property type="term" value="F:electron transporter, transferring electrons within the cyclic electron transport pathway of photosynthesis activity"/>
    <property type="evidence" value="ECO:0007669"/>
    <property type="project" value="InterPro"/>
</dbReference>
<dbReference type="GO" id="GO:0008121">
    <property type="term" value="F:ubiquinol-cytochrome-c reductase activity"/>
    <property type="evidence" value="ECO:0007669"/>
    <property type="project" value="TreeGrafter"/>
</dbReference>
<dbReference type="GO" id="GO:0009767">
    <property type="term" value="P:photosynthetic electron transport chain"/>
    <property type="evidence" value="ECO:0007669"/>
    <property type="project" value="InterPro"/>
</dbReference>
<dbReference type="CDD" id="cd00290">
    <property type="entry name" value="cytochrome_b_C"/>
    <property type="match status" value="1"/>
</dbReference>
<dbReference type="FunFam" id="1.10.287.980:FF:000001">
    <property type="entry name" value="Cytochrome b6-f complex subunit 4"/>
    <property type="match status" value="1"/>
</dbReference>
<dbReference type="FunFam" id="1.20.5.510:FF:000002">
    <property type="entry name" value="Cytochrome b6-f complex subunit 4"/>
    <property type="match status" value="1"/>
</dbReference>
<dbReference type="Gene3D" id="1.10.287.980">
    <property type="entry name" value="plastocyanin oxidoreductase"/>
    <property type="match status" value="1"/>
</dbReference>
<dbReference type="Gene3D" id="1.20.5.510">
    <property type="entry name" value="Single helix bin"/>
    <property type="match status" value="1"/>
</dbReference>
<dbReference type="HAMAP" id="MF_01344">
    <property type="entry name" value="Cytb6_f_subIV"/>
    <property type="match status" value="1"/>
</dbReference>
<dbReference type="InterPro" id="IPR005798">
    <property type="entry name" value="Cyt_b/b6_C"/>
</dbReference>
<dbReference type="InterPro" id="IPR036150">
    <property type="entry name" value="Cyt_b/b6_C_sf"/>
</dbReference>
<dbReference type="InterPro" id="IPR005870">
    <property type="entry name" value="Cyt_b6/f_cplx_suIV"/>
</dbReference>
<dbReference type="InterPro" id="IPR048260">
    <property type="entry name" value="Cytochrome_b_C_euk/bac"/>
</dbReference>
<dbReference type="NCBIfam" id="TIGR01156">
    <property type="entry name" value="cytb6_f_IV"/>
    <property type="match status" value="1"/>
</dbReference>
<dbReference type="PANTHER" id="PTHR19271">
    <property type="entry name" value="CYTOCHROME B"/>
    <property type="match status" value="1"/>
</dbReference>
<dbReference type="PANTHER" id="PTHR19271:SF41">
    <property type="entry name" value="CYTOCHROME B_B6 C-TERMINAL REGION PROFILE DOMAIN-CONTAINING PROTEIN"/>
    <property type="match status" value="1"/>
</dbReference>
<dbReference type="Pfam" id="PF00032">
    <property type="entry name" value="Cytochrom_B_C"/>
    <property type="match status" value="1"/>
</dbReference>
<dbReference type="PIRSF" id="PIRSF000033">
    <property type="entry name" value="B6f_17K"/>
    <property type="match status" value="1"/>
</dbReference>
<dbReference type="SUPFAM" id="SSF81648">
    <property type="entry name" value="a domain/subunit of cytochrome bc1 complex (Ubiquinol-cytochrome c reductase)"/>
    <property type="match status" value="1"/>
</dbReference>
<dbReference type="PROSITE" id="PS51003">
    <property type="entry name" value="CYTB_CTER"/>
    <property type="match status" value="1"/>
</dbReference>
<name>PETD_ACAM1</name>
<protein>
    <recommendedName>
        <fullName evidence="1">Cytochrome b6-f complex subunit 4</fullName>
    </recommendedName>
    <alternativeName>
        <fullName evidence="1">17 kDa polypeptide</fullName>
    </alternativeName>
</protein>
<sequence>MAKILKQPDLSDPQLKEKLKKGMGHNYYGEPAWPNDLLYIFPVVIMGTISLVIGLAVLDPAMIGEPSNPFATPLEILPEWYLYPVFQILRTVPSKLLGVLIQTTIPLGLMLIPFIENVNKFQNPFRRPIATSVFLFSVVFTLWLGIGATLPIDKSLTLGLF</sequence>